<name>AL3F1_ARATH</name>
<keyword id="KW-0520">NAD</keyword>
<keyword id="KW-0560">Oxidoreductase</keyword>
<keyword id="KW-1185">Reference proteome</keyword>
<dbReference type="EC" id="1.2.1.3"/>
<dbReference type="EMBL" id="AJ584644">
    <property type="protein sequence ID" value="CAE48163.1"/>
    <property type="molecule type" value="mRNA"/>
</dbReference>
<dbReference type="EMBL" id="AL022141">
    <property type="protein sequence ID" value="CAA18131.1"/>
    <property type="status" value="ALT_SEQ"/>
    <property type="molecule type" value="Genomic_DNA"/>
</dbReference>
<dbReference type="EMBL" id="AL161589">
    <property type="protein sequence ID" value="CAB80296.1"/>
    <property type="status" value="ALT_SEQ"/>
    <property type="molecule type" value="Genomic_DNA"/>
</dbReference>
<dbReference type="EMBL" id="CP002687">
    <property type="protein sequence ID" value="AEE86639.1"/>
    <property type="molecule type" value="Genomic_DNA"/>
</dbReference>
<dbReference type="PIR" id="T04594">
    <property type="entry name" value="T04594"/>
</dbReference>
<dbReference type="RefSeq" id="NP_195348.2">
    <property type="nucleotide sequence ID" value="NM_119793.5"/>
</dbReference>
<dbReference type="SMR" id="Q70E96"/>
<dbReference type="BioGRID" id="15064">
    <property type="interactions" value="9"/>
</dbReference>
<dbReference type="FunCoup" id="Q70E96">
    <property type="interactions" value="2195"/>
</dbReference>
<dbReference type="IntAct" id="Q70E96">
    <property type="interactions" value="8"/>
</dbReference>
<dbReference type="STRING" id="3702.Q70E96"/>
<dbReference type="iPTMnet" id="Q70E96"/>
<dbReference type="PaxDb" id="3702-AT4G36250.1"/>
<dbReference type="ProteomicsDB" id="245039"/>
<dbReference type="EnsemblPlants" id="AT4G36250.1">
    <property type="protein sequence ID" value="AT4G36250.1"/>
    <property type="gene ID" value="AT4G36250"/>
</dbReference>
<dbReference type="GeneID" id="829782"/>
<dbReference type="Gramene" id="AT4G36250.1">
    <property type="protein sequence ID" value="AT4G36250.1"/>
    <property type="gene ID" value="AT4G36250"/>
</dbReference>
<dbReference type="KEGG" id="ath:AT4G36250"/>
<dbReference type="Araport" id="AT4G36250"/>
<dbReference type="TAIR" id="AT4G36250">
    <property type="gene designation" value="ALDH3F1"/>
</dbReference>
<dbReference type="eggNOG" id="KOG2456">
    <property type="taxonomic scope" value="Eukaryota"/>
</dbReference>
<dbReference type="HOGENOM" id="CLU_005391_3_0_1"/>
<dbReference type="InParanoid" id="Q70E96"/>
<dbReference type="OMA" id="EIDWCKQ"/>
<dbReference type="PhylomeDB" id="Q70E96"/>
<dbReference type="BioCyc" id="ARA:AT4G36250-MONOMER"/>
<dbReference type="PRO" id="PR:Q70E96"/>
<dbReference type="Proteomes" id="UP000006548">
    <property type="component" value="Chromosome 4"/>
</dbReference>
<dbReference type="ExpressionAtlas" id="Q70E96">
    <property type="expression patterns" value="baseline and differential"/>
</dbReference>
<dbReference type="GO" id="GO:0005783">
    <property type="term" value="C:endoplasmic reticulum"/>
    <property type="evidence" value="ECO:0007005"/>
    <property type="project" value="TAIR"/>
</dbReference>
<dbReference type="GO" id="GO:0005886">
    <property type="term" value="C:plasma membrane"/>
    <property type="evidence" value="ECO:0007005"/>
    <property type="project" value="TAIR"/>
</dbReference>
<dbReference type="GO" id="GO:0004029">
    <property type="term" value="F:aldehyde dehydrogenase (NAD+) activity"/>
    <property type="evidence" value="ECO:0000250"/>
    <property type="project" value="TAIR"/>
</dbReference>
<dbReference type="GO" id="GO:0006081">
    <property type="term" value="P:aldehyde metabolic process"/>
    <property type="evidence" value="ECO:0007669"/>
    <property type="project" value="InterPro"/>
</dbReference>
<dbReference type="CDD" id="cd07137">
    <property type="entry name" value="ALDH_F3FHI"/>
    <property type="match status" value="1"/>
</dbReference>
<dbReference type="FunFam" id="3.40.309.10:FF:000003">
    <property type="entry name" value="Aldehyde dehydrogenase"/>
    <property type="match status" value="1"/>
</dbReference>
<dbReference type="FunFam" id="3.40.605.10:FF:000004">
    <property type="entry name" value="Aldehyde dehydrogenase"/>
    <property type="match status" value="1"/>
</dbReference>
<dbReference type="Gene3D" id="3.40.605.10">
    <property type="entry name" value="Aldehyde Dehydrogenase, Chain A, domain 1"/>
    <property type="match status" value="1"/>
</dbReference>
<dbReference type="Gene3D" id="3.40.309.10">
    <property type="entry name" value="Aldehyde Dehydrogenase, Chain A, domain 2"/>
    <property type="match status" value="1"/>
</dbReference>
<dbReference type="InterPro" id="IPR016161">
    <property type="entry name" value="Ald_DH/histidinol_DH"/>
</dbReference>
<dbReference type="InterPro" id="IPR016163">
    <property type="entry name" value="Ald_DH_C"/>
</dbReference>
<dbReference type="InterPro" id="IPR016162">
    <property type="entry name" value="Ald_DH_N"/>
</dbReference>
<dbReference type="InterPro" id="IPR015590">
    <property type="entry name" value="Aldehyde_DH_dom"/>
</dbReference>
<dbReference type="InterPro" id="IPR012394">
    <property type="entry name" value="Aldehyde_DH_NAD(P)"/>
</dbReference>
<dbReference type="PANTHER" id="PTHR43570">
    <property type="entry name" value="ALDEHYDE DEHYDROGENASE"/>
    <property type="match status" value="1"/>
</dbReference>
<dbReference type="PANTHER" id="PTHR43570:SF17">
    <property type="entry name" value="ALDEHYDE DEHYDROGENASE FAMILY 3 MEMBER F1"/>
    <property type="match status" value="1"/>
</dbReference>
<dbReference type="Pfam" id="PF00171">
    <property type="entry name" value="Aldedh"/>
    <property type="match status" value="1"/>
</dbReference>
<dbReference type="PIRSF" id="PIRSF036492">
    <property type="entry name" value="ALDH"/>
    <property type="match status" value="1"/>
</dbReference>
<dbReference type="SUPFAM" id="SSF53720">
    <property type="entry name" value="ALDH-like"/>
    <property type="match status" value="1"/>
</dbReference>
<proteinExistence type="evidence at transcript level"/>
<evidence type="ECO:0000250" key="1"/>
<evidence type="ECO:0000269" key="2">
    <source>
    </source>
</evidence>
<evidence type="ECO:0000305" key="3"/>
<feature type="chain" id="PRO_0000256059" description="Aldehyde dehydrogenase family 3 member F1">
    <location>
        <begin position="1"/>
        <end position="484"/>
    </location>
</feature>
<feature type="active site" description="Proton acceptor" evidence="1">
    <location>
        <position position="214"/>
    </location>
</feature>
<feature type="active site" description="Nucleophile" evidence="1">
    <location>
        <position position="252"/>
    </location>
</feature>
<feature type="binding site" evidence="1">
    <location>
        <begin position="192"/>
        <end position="197"/>
    </location>
    <ligand>
        <name>NAD(+)</name>
        <dbReference type="ChEBI" id="CHEBI:57540"/>
    </ligand>
</feature>
<feature type="site" description="Transition state stabilizer" evidence="1">
    <location>
        <position position="119"/>
    </location>
</feature>
<feature type="sequence conflict" description="In Ref. 1; CAE48163." evidence="3" ref="1">
    <original>H</original>
    <variation>L</variation>
    <location>
        <position position="59"/>
    </location>
</feature>
<feature type="sequence conflict" description="In Ref. 1; CAE48163." evidence="3" ref="1">
    <location>
        <position position="226"/>
    </location>
</feature>
<comment type="catalytic activity">
    <reaction>
        <text>an aldehyde + NAD(+) + H2O = a carboxylate + NADH + 2 H(+)</text>
        <dbReference type="Rhea" id="RHEA:16185"/>
        <dbReference type="ChEBI" id="CHEBI:15377"/>
        <dbReference type="ChEBI" id="CHEBI:15378"/>
        <dbReference type="ChEBI" id="CHEBI:17478"/>
        <dbReference type="ChEBI" id="CHEBI:29067"/>
        <dbReference type="ChEBI" id="CHEBI:57540"/>
        <dbReference type="ChEBI" id="CHEBI:57945"/>
        <dbReference type="EC" id="1.2.1.3"/>
    </reaction>
</comment>
<comment type="subunit">
    <text evidence="1">Homotetramer.</text>
</comment>
<comment type="tissue specificity">
    <text evidence="2">Constituively expressed at low levels.</text>
</comment>
<comment type="induction">
    <text evidence="2">Not induced by abscisic acid (ABA), dehydration and salt stress.</text>
</comment>
<comment type="similarity">
    <text evidence="3">Belongs to the aldehyde dehydrogenase family.</text>
</comment>
<comment type="sequence caution" evidence="3">
    <conflict type="erroneous gene model prediction">
        <sequence resource="EMBL-CDS" id="CAA18131"/>
    </conflict>
</comment>
<comment type="sequence caution" evidence="3">
    <conflict type="erroneous gene model prediction">
        <sequence resource="EMBL-CDS" id="CAB80296"/>
    </conflict>
</comment>
<gene>
    <name type="primary">ALDH3F1</name>
    <name type="ordered locus">At4g36250</name>
    <name type="ORF">F23E13.140</name>
</gene>
<protein>
    <recommendedName>
        <fullName>Aldehyde dehydrogenase family 3 member F1</fullName>
        <ecNumber>1.2.1.3</ecNumber>
    </recommendedName>
</protein>
<organism>
    <name type="scientific">Arabidopsis thaliana</name>
    <name type="common">Mouse-ear cress</name>
    <dbReference type="NCBI Taxonomy" id="3702"/>
    <lineage>
        <taxon>Eukaryota</taxon>
        <taxon>Viridiplantae</taxon>
        <taxon>Streptophyta</taxon>
        <taxon>Embryophyta</taxon>
        <taxon>Tracheophyta</taxon>
        <taxon>Spermatophyta</taxon>
        <taxon>Magnoliopsida</taxon>
        <taxon>eudicotyledons</taxon>
        <taxon>Gunneridae</taxon>
        <taxon>Pentapetalae</taxon>
        <taxon>rosids</taxon>
        <taxon>malvids</taxon>
        <taxon>Brassicales</taxon>
        <taxon>Brassicaceae</taxon>
        <taxon>Camelineae</taxon>
        <taxon>Arabidopsis</taxon>
    </lineage>
</organism>
<reference key="1">
    <citation type="journal article" date="2005" name="Plant Mol. Biol.">
        <title>Detailed expression analysis of selected genes of the aldehyde dehydrogenase(ALDH) gene superfamily in Arabidopsis thaliana.</title>
        <authorList>
            <person name="Kirch H.-H."/>
            <person name="Schlingensiepen S."/>
            <person name="Kotchoni S."/>
            <person name="Sunkar R."/>
            <person name="Bartels D."/>
        </authorList>
    </citation>
    <scope>NUCLEOTIDE SEQUENCE [MRNA]</scope>
    <scope>TISSUE SPECIFICITY</scope>
    <scope>INDUCTION</scope>
</reference>
<reference key="2">
    <citation type="journal article" date="1999" name="Nature">
        <title>Sequence and analysis of chromosome 4 of the plant Arabidopsis thaliana.</title>
        <authorList>
            <person name="Mayer K.F.X."/>
            <person name="Schueller C."/>
            <person name="Wambutt R."/>
            <person name="Murphy G."/>
            <person name="Volckaert G."/>
            <person name="Pohl T."/>
            <person name="Duesterhoeft A."/>
            <person name="Stiekema W."/>
            <person name="Entian K.-D."/>
            <person name="Terryn N."/>
            <person name="Harris B."/>
            <person name="Ansorge W."/>
            <person name="Brandt P."/>
            <person name="Grivell L.A."/>
            <person name="Rieger M."/>
            <person name="Weichselgartner M."/>
            <person name="de Simone V."/>
            <person name="Obermaier B."/>
            <person name="Mache R."/>
            <person name="Mueller M."/>
            <person name="Kreis M."/>
            <person name="Delseny M."/>
            <person name="Puigdomenech P."/>
            <person name="Watson M."/>
            <person name="Schmidtheini T."/>
            <person name="Reichert B."/>
            <person name="Portetelle D."/>
            <person name="Perez-Alonso M."/>
            <person name="Boutry M."/>
            <person name="Bancroft I."/>
            <person name="Vos P."/>
            <person name="Hoheisel J."/>
            <person name="Zimmermann W."/>
            <person name="Wedler H."/>
            <person name="Ridley P."/>
            <person name="Langham S.-A."/>
            <person name="McCullagh B."/>
            <person name="Bilham L."/>
            <person name="Robben J."/>
            <person name="van der Schueren J."/>
            <person name="Grymonprez B."/>
            <person name="Chuang Y.-J."/>
            <person name="Vandenbussche F."/>
            <person name="Braeken M."/>
            <person name="Weltjens I."/>
            <person name="Voet M."/>
            <person name="Bastiaens I."/>
            <person name="Aert R."/>
            <person name="Defoor E."/>
            <person name="Weitzenegger T."/>
            <person name="Bothe G."/>
            <person name="Ramsperger U."/>
            <person name="Hilbert H."/>
            <person name="Braun M."/>
            <person name="Holzer E."/>
            <person name="Brandt A."/>
            <person name="Peters S."/>
            <person name="van Staveren M."/>
            <person name="Dirkse W."/>
            <person name="Mooijman P."/>
            <person name="Klein Lankhorst R."/>
            <person name="Rose M."/>
            <person name="Hauf J."/>
            <person name="Koetter P."/>
            <person name="Berneiser S."/>
            <person name="Hempel S."/>
            <person name="Feldpausch M."/>
            <person name="Lamberth S."/>
            <person name="Van den Daele H."/>
            <person name="De Keyser A."/>
            <person name="Buysshaert C."/>
            <person name="Gielen J."/>
            <person name="Villarroel R."/>
            <person name="De Clercq R."/>
            <person name="van Montagu M."/>
            <person name="Rogers J."/>
            <person name="Cronin A."/>
            <person name="Quail M.A."/>
            <person name="Bray-Allen S."/>
            <person name="Clark L."/>
            <person name="Doggett J."/>
            <person name="Hall S."/>
            <person name="Kay M."/>
            <person name="Lennard N."/>
            <person name="McLay K."/>
            <person name="Mayes R."/>
            <person name="Pettett A."/>
            <person name="Rajandream M.A."/>
            <person name="Lyne M."/>
            <person name="Benes V."/>
            <person name="Rechmann S."/>
            <person name="Borkova D."/>
            <person name="Bloecker H."/>
            <person name="Scharfe M."/>
            <person name="Grimm M."/>
            <person name="Loehnert T.-H."/>
            <person name="Dose S."/>
            <person name="de Haan M."/>
            <person name="Maarse A.C."/>
            <person name="Schaefer M."/>
            <person name="Mueller-Auer S."/>
            <person name="Gabel C."/>
            <person name="Fuchs M."/>
            <person name="Fartmann B."/>
            <person name="Granderath K."/>
            <person name="Dauner D."/>
            <person name="Herzl A."/>
            <person name="Neumann S."/>
            <person name="Argiriou A."/>
            <person name="Vitale D."/>
            <person name="Liguori R."/>
            <person name="Piravandi E."/>
            <person name="Massenet O."/>
            <person name="Quigley F."/>
            <person name="Clabauld G."/>
            <person name="Muendlein A."/>
            <person name="Felber R."/>
            <person name="Schnabl S."/>
            <person name="Hiller R."/>
            <person name="Schmidt W."/>
            <person name="Lecharny A."/>
            <person name="Aubourg S."/>
            <person name="Chefdor F."/>
            <person name="Cooke R."/>
            <person name="Berger C."/>
            <person name="Monfort A."/>
            <person name="Casacuberta E."/>
            <person name="Gibbons T."/>
            <person name="Weber N."/>
            <person name="Vandenbol M."/>
            <person name="Bargues M."/>
            <person name="Terol J."/>
            <person name="Torres A."/>
            <person name="Perez-Perez A."/>
            <person name="Purnelle B."/>
            <person name="Bent E."/>
            <person name="Johnson S."/>
            <person name="Tacon D."/>
            <person name="Jesse T."/>
            <person name="Heijnen L."/>
            <person name="Schwarz S."/>
            <person name="Scholler P."/>
            <person name="Heber S."/>
            <person name="Francs P."/>
            <person name="Bielke C."/>
            <person name="Frishman D."/>
            <person name="Haase D."/>
            <person name="Lemcke K."/>
            <person name="Mewes H.-W."/>
            <person name="Stocker S."/>
            <person name="Zaccaria P."/>
            <person name="Bevan M."/>
            <person name="Wilson R.K."/>
            <person name="de la Bastide M."/>
            <person name="Habermann K."/>
            <person name="Parnell L."/>
            <person name="Dedhia N."/>
            <person name="Gnoj L."/>
            <person name="Schutz K."/>
            <person name="Huang E."/>
            <person name="Spiegel L."/>
            <person name="Sekhon M."/>
            <person name="Murray J."/>
            <person name="Sheet P."/>
            <person name="Cordes M."/>
            <person name="Abu-Threideh J."/>
            <person name="Stoneking T."/>
            <person name="Kalicki J."/>
            <person name="Graves T."/>
            <person name="Harmon G."/>
            <person name="Edwards J."/>
            <person name="Latreille P."/>
            <person name="Courtney L."/>
            <person name="Cloud J."/>
            <person name="Abbott A."/>
            <person name="Scott K."/>
            <person name="Johnson D."/>
            <person name="Minx P."/>
            <person name="Bentley D."/>
            <person name="Fulton B."/>
            <person name="Miller N."/>
            <person name="Greco T."/>
            <person name="Kemp K."/>
            <person name="Kramer J."/>
            <person name="Fulton L."/>
            <person name="Mardis E."/>
            <person name="Dante M."/>
            <person name="Pepin K."/>
            <person name="Hillier L.W."/>
            <person name="Nelson J."/>
            <person name="Spieth J."/>
            <person name="Ryan E."/>
            <person name="Andrews S."/>
            <person name="Geisel C."/>
            <person name="Layman D."/>
            <person name="Du H."/>
            <person name="Ali J."/>
            <person name="Berghoff A."/>
            <person name="Jones K."/>
            <person name="Drone K."/>
            <person name="Cotton M."/>
            <person name="Joshu C."/>
            <person name="Antonoiu B."/>
            <person name="Zidanic M."/>
            <person name="Strong C."/>
            <person name="Sun H."/>
            <person name="Lamar B."/>
            <person name="Yordan C."/>
            <person name="Ma P."/>
            <person name="Zhong J."/>
            <person name="Preston R."/>
            <person name="Vil D."/>
            <person name="Shekher M."/>
            <person name="Matero A."/>
            <person name="Shah R."/>
            <person name="Swaby I.K."/>
            <person name="O'Shaughnessy A."/>
            <person name="Rodriguez M."/>
            <person name="Hoffman J."/>
            <person name="Till S."/>
            <person name="Granat S."/>
            <person name="Shohdy N."/>
            <person name="Hasegawa A."/>
            <person name="Hameed A."/>
            <person name="Lodhi M."/>
            <person name="Johnson A."/>
            <person name="Chen E."/>
            <person name="Marra M.A."/>
            <person name="Martienssen R."/>
            <person name="McCombie W.R."/>
        </authorList>
    </citation>
    <scope>NUCLEOTIDE SEQUENCE [LARGE SCALE GENOMIC DNA]</scope>
    <source>
        <strain>cv. Columbia</strain>
    </source>
</reference>
<reference key="3">
    <citation type="journal article" date="2017" name="Plant J.">
        <title>Araport11: a complete reannotation of the Arabidopsis thaliana reference genome.</title>
        <authorList>
            <person name="Cheng C.Y."/>
            <person name="Krishnakumar V."/>
            <person name="Chan A.P."/>
            <person name="Thibaud-Nissen F."/>
            <person name="Schobel S."/>
            <person name="Town C.D."/>
        </authorList>
    </citation>
    <scope>GENOME REANNOTATION</scope>
    <source>
        <strain>cv. Columbia</strain>
    </source>
</reference>
<reference key="4">
    <citation type="journal article" date="2004" name="Trends Plant Sci.">
        <title>The ALDH gene superfamily of Arabidopsis.</title>
        <authorList>
            <person name="Kirch H.-H."/>
            <person name="Bartels D."/>
            <person name="Wei Y."/>
            <person name="Schnable P.S."/>
            <person name="Wood A.J."/>
        </authorList>
    </citation>
    <scope>NOMENCLATURE</scope>
</reference>
<accession>Q70E96</accession>
<accession>O65516</accession>
<sequence>MEAMKETVEESLREMRETFASGRTRSLKWRKAQIGAIYEMVKDNEDKICNALFQDLGKHSTEAFRDELGVVLRTATVAINCLDKWAVPKHSKLPLLFYPAKGKVISEPYGTVLVLSSWNFPISLSLDPLIGAIAAGNTVLLKSSELSPNASAFLAKTIPAYLDTKAIKVIEGGPDVATILLQHQWDKIFFTGSPKIGRIIMAAAAQHLTPVTLELGGKCPTIVDHHTISKNIKSVVKRIAGGKWGSCNGQACISVDYVLIEKSFAPTLIDMLKPTIKSFFGENPKESGCLSRIANKHHVQRLSRLLSDPRVQASIVYGGSIDEDKLYVEPTILLDPPLDSEIMNEEIFGPILPIITVRDIQESIGIINTKPKPLAIYAFTNDENLKTRILSETSSGSVTFNDVMIQYMCDALPFGGVGESGIGRYHGKYSFDCFSHEKAIMEGSLGMDLEARYPPWNNFKLTFIRLAFREAYFKLILLMLGLKR</sequence>